<accession>P68333</accession>
<accession>P10237</accession>
<name>GK_HHV1R</name>
<dbReference type="EMBL" id="S51910">
    <property type="protein sequence ID" value="AAB24732.1"/>
    <property type="molecule type" value="Genomic_DNA"/>
</dbReference>
<dbReference type="RefSeq" id="YP_009137129.1">
    <property type="nucleotide sequence ID" value="NC_001806.2"/>
</dbReference>
<dbReference type="SMR" id="P68333"/>
<dbReference type="GlyCosmos" id="P68333">
    <property type="glycosylation" value="2 sites, No reported glycans"/>
</dbReference>
<dbReference type="DNASU" id="2703425"/>
<dbReference type="GeneID" id="2703425"/>
<dbReference type="KEGG" id="vg:2703425"/>
<dbReference type="GO" id="GO:0044175">
    <property type="term" value="C:host cell endosome membrane"/>
    <property type="evidence" value="ECO:0007669"/>
    <property type="project" value="UniProtKB-SubCell"/>
</dbReference>
<dbReference type="GO" id="GO:0044178">
    <property type="term" value="C:host cell Golgi membrane"/>
    <property type="evidence" value="ECO:0007669"/>
    <property type="project" value="UniProtKB-SubCell"/>
</dbReference>
<dbReference type="GO" id="GO:0020002">
    <property type="term" value="C:host cell plasma membrane"/>
    <property type="evidence" value="ECO:0007669"/>
    <property type="project" value="UniProtKB-SubCell"/>
</dbReference>
<dbReference type="GO" id="GO:0016020">
    <property type="term" value="C:membrane"/>
    <property type="evidence" value="ECO:0007669"/>
    <property type="project" value="UniProtKB-KW"/>
</dbReference>
<dbReference type="GO" id="GO:0039700">
    <property type="term" value="P:fusion of viral membrane with host outer nuclear membrane"/>
    <property type="evidence" value="ECO:0007669"/>
    <property type="project" value="UniProtKB-KW"/>
</dbReference>
<dbReference type="GO" id="GO:0060141">
    <property type="term" value="P:symbiont-mediated induction of syncytium formation"/>
    <property type="evidence" value="ECO:0007669"/>
    <property type="project" value="UniProtKB-KW"/>
</dbReference>
<dbReference type="InterPro" id="IPR002567">
    <property type="entry name" value="GK"/>
</dbReference>
<dbReference type="Pfam" id="PF01621">
    <property type="entry name" value="Fusion_gly_K"/>
    <property type="match status" value="1"/>
</dbReference>
<gene>
    <name type="primary">gK</name>
    <name type="ORF">UL53</name>
</gene>
<evidence type="ECO:0000250" key="1"/>
<evidence type="ECO:0000255" key="2"/>
<evidence type="ECO:0000305" key="3"/>
<proteinExistence type="inferred from homology"/>
<protein>
    <recommendedName>
        <fullName>Envelope glycoprotein K</fullName>
    </recommendedName>
    <alternativeName>
        <fullName>Syncytial protein</fullName>
    </alternativeName>
</protein>
<organism>
    <name type="scientific">Human herpesvirus 1 (strain R15)</name>
    <name type="common">HHV-1</name>
    <name type="synonym">Human herpes simplex virus 1</name>
    <dbReference type="NCBI Taxonomy" id="36345"/>
    <lineage>
        <taxon>Viruses</taxon>
        <taxon>Duplodnaviria</taxon>
        <taxon>Heunggongvirae</taxon>
        <taxon>Peploviricota</taxon>
        <taxon>Herviviricetes</taxon>
        <taxon>Herpesvirales</taxon>
        <taxon>Orthoherpesviridae</taxon>
        <taxon>Alphaherpesvirinae</taxon>
        <taxon>Simplexvirus</taxon>
        <taxon>Simplexvirus humanalpha1</taxon>
        <taxon>Human herpesvirus 1</taxon>
    </lineage>
</organism>
<reference key="1">
    <citation type="journal article" date="1992" name="Virus Res.">
        <title>Mutations in the UL53 gene of HSV-1 abolish virus neurovirulence to mice by the intracerebral route of infection.</title>
        <authorList>
            <person name="Moyal M."/>
            <person name="Berkowitz C."/>
            <person name="Rosen-Wolff A."/>
            <person name="Darai G."/>
            <person name="Becker Y."/>
        </authorList>
    </citation>
    <scope>NUCLEOTIDE SEQUENCE [GENOMIC DNA]</scope>
</reference>
<feature type="signal peptide">
    <location>
        <begin position="1"/>
        <end position="30"/>
    </location>
</feature>
<feature type="chain" id="PRO_0000038302" description="Envelope glycoprotein K">
    <location>
        <begin position="31"/>
        <end position="338"/>
    </location>
</feature>
<feature type="topological domain" description="Extracellular" evidence="2">
    <location>
        <begin position="31"/>
        <end position="121"/>
    </location>
</feature>
<feature type="transmembrane region" description="Helical" evidence="2">
    <location>
        <begin position="122"/>
        <end position="140"/>
    </location>
</feature>
<feature type="topological domain" description="Cytoplasmic" evidence="2">
    <location>
        <begin position="141"/>
        <end position="212"/>
    </location>
</feature>
<feature type="transmembrane region" description="Helical" evidence="2">
    <location>
        <begin position="213"/>
        <end position="233"/>
    </location>
</feature>
<feature type="topological domain" description="Extracellular" evidence="2">
    <location>
        <begin position="234"/>
        <end position="243"/>
    </location>
</feature>
<feature type="transmembrane region" description="Helical" evidence="2">
    <location>
        <begin position="244"/>
        <end position="264"/>
    </location>
</feature>
<feature type="topological domain" description="Cytoplasmic" evidence="2">
    <location>
        <begin position="265"/>
        <end position="301"/>
    </location>
</feature>
<feature type="transmembrane region" description="Helical" evidence="2">
    <location>
        <begin position="302"/>
        <end position="322"/>
    </location>
</feature>
<feature type="topological domain" description="Extracellular" evidence="2">
    <location>
        <begin position="323"/>
        <end position="338"/>
    </location>
</feature>
<feature type="region of interest" description="Involved in fusion" evidence="2">
    <location>
        <begin position="31"/>
        <end position="121"/>
    </location>
</feature>
<feature type="region of interest" description="Interaction with UL20" evidence="2">
    <location>
        <begin position="265"/>
        <end position="301"/>
    </location>
</feature>
<feature type="glycosylation site" description="N-linked (GlcNAc...) asparagine; by host" evidence="2">
    <location>
        <position position="48"/>
    </location>
</feature>
<feature type="glycosylation site" description="N-linked (GlcNAc...) asparagine; by host" evidence="2">
    <location>
        <position position="58"/>
    </location>
</feature>
<sequence length="338" mass="37573">MLAVRSLQHLSTVVLITAYGLVLVWYTVFGASPLHRCIYAVRPTGTNNDTALVWMKMNQTLLFLGAPTHPPNGGWRNHAHICYANLIAGRVVPFQVPPDAMNRRIMNVHEAVNCLETLWYTRVRLVVVGWFLYLAFVALHQRRCMFGVVSPAHKMVAPATYLLNYAGRIVSSVFLQYPYTKITRLLCELSVQRQNLVQLFETDPVTFLYHRPAIGVIVGCELMLRFVAVGLIVGTAFISRGACAITYPLFLTITTWCFVSTIGLTELYCILRRGPAPKNADKAAAPGRSKGLSGVCGRCCSIILSGIAVRLCYIAVVAGVVLVALHYEQEIQRRLFDV</sequence>
<keyword id="KW-0325">Glycoprotein</keyword>
<keyword id="KW-1032">Host cell membrane</keyword>
<keyword id="KW-1039">Host endosome</keyword>
<keyword id="KW-1040">Host Golgi apparatus</keyword>
<keyword id="KW-1043">Host membrane</keyword>
<keyword id="KW-0472">Membrane</keyword>
<keyword id="KW-0732">Signal</keyword>
<keyword id="KW-1180">Syncytium formation induced by viral infection</keyword>
<keyword id="KW-0812">Transmembrane</keyword>
<keyword id="KW-1133">Transmembrane helix</keyword>
<keyword id="KW-1181">Viral primary envelope fusion with host outer nuclear membrane</keyword>
<keyword id="KW-1188">Viral release from host cell</keyword>
<organismHost>
    <name type="scientific">Homo sapiens</name>
    <name type="common">Human</name>
    <dbReference type="NCBI Taxonomy" id="9606"/>
</organismHost>
<comment type="function">
    <text evidence="1">Glycoprotein that probably modulates membrane fusion events during secondary envelopment of cytoplasmic capsids that bud into specific trans-Golgi network (TGN)-derived membranes. Also plays a role, together with gB, in virus-induced cell-to-cell fusion (syncytia formation). Seems to block fusion of virions with infected-cell membranes (By similarity).</text>
</comment>
<comment type="subunit">
    <text evidence="1">Interacts (via UL20 interaction region) with protein UL20 (via N-terminus); this interaction probably plays a role in the coordinate transport of protein UL20 and gK to the trans-Golgi network (TGN), and is required for the cell surface expression of gK.</text>
</comment>
<comment type="subcellular location">
    <subcellularLocation>
        <location evidence="1">Host cell membrane</location>
        <topology evidence="1">Multi-pass membrane protein</topology>
    </subcellularLocation>
    <subcellularLocation>
        <location evidence="1">Host endosome membrane</location>
        <topology evidence="1">Multi-pass membrane protein</topology>
    </subcellularLocation>
    <subcellularLocation>
        <location evidence="1">Host Golgi apparatus membrane</location>
        <topology evidence="1">Multi-pass membrane protein</topology>
    </subcellularLocation>
    <text evidence="1">During virion morphogenesis, this protein probably accumulates in the endosomes and trans-Golgi where secondary envelopment occurs. It is probably transported with UL20 to the cell surface from where it is endocytosed and directed to the trans-Golgi network (TGN). Cell surface expression of gK is required for virus-induced cell-to-cell fusion. Probably not present in extracellular virions (By similarity).</text>
</comment>
<comment type="PTM">
    <text evidence="1">N-glycosylated.</text>
</comment>
<comment type="similarity">
    <text evidence="3">Belongs to the alphaherpesvirinae glycoprotein K family.</text>
</comment>